<gene>
    <name type="primary">dbp5</name>
    <name type="ORF">BC1G_10065</name>
    <name type="ORF">BCIN_14g03100</name>
</gene>
<feature type="chain" id="PRO_0000310204" description="ATP-dependent RNA helicase dbp5">
    <location>
        <begin position="1"/>
        <end position="470"/>
    </location>
</feature>
<feature type="domain" description="Helicase ATP-binding" evidence="2">
    <location>
        <begin position="102"/>
        <end position="270"/>
    </location>
</feature>
<feature type="domain" description="Helicase C-terminal" evidence="3">
    <location>
        <begin position="281"/>
        <end position="459"/>
    </location>
</feature>
<feature type="region of interest" description="Disordered" evidence="4">
    <location>
        <begin position="1"/>
        <end position="43"/>
    </location>
</feature>
<feature type="short sequence motif" description="Q motif">
    <location>
        <begin position="69"/>
        <end position="97"/>
    </location>
</feature>
<feature type="short sequence motif" description="DEAD box">
    <location>
        <begin position="218"/>
        <end position="221"/>
    </location>
</feature>
<feature type="binding site" evidence="2">
    <location>
        <begin position="115"/>
        <end position="122"/>
    </location>
    <ligand>
        <name>ATP</name>
        <dbReference type="ChEBI" id="CHEBI:30616"/>
    </ligand>
</feature>
<sequence>MAESKSTSWADEVASPTIEKNEGNPLEEAQLDGATEPLGGGTLQDGQYEVEVKLSDIQGDETSPLYSVETFEQLGIDASILKGLYAMNFKKPSKIQEKALPLLLRNPPTNMIAQSQSGTGKTAAFVITILSRLDFSKPTTPQALCLAPSRELARQIEGVIRSIGQFVDGLTVQAAIPGAVERNAKVNAMVVVGTPGTVMDLIKRRSIDASQMKILCLDEADNMLDQQGLGDQCMRVKSMIRVEQILLFSATFPDEVYGFAQDFSPRANEIKLKRDELTVSGIKQMFMDCPNEVGKYEILVKLYGLMTIGSSIIFVKRRDTASNIAERLTKEGHKVAAVHGAFEGSERDQVLEDFRQGKAKVLITTNVLARGIDVQSVSMVINYDVPMKGRSDSEPDPETYLHRIGRTGRFGRVGVSISFVFDRKSYDALNQIANHYNIDLIKLNQDDWDETEEIVKKVIKSSRAGTNLQS</sequence>
<accession>A6SBT4</accession>
<accession>A0A384K2U8</accession>
<reference key="1">
    <citation type="journal article" date="2011" name="PLoS Genet.">
        <title>Genomic analysis of the necrotrophic fungal pathogens Sclerotinia sclerotiorum and Botrytis cinerea.</title>
        <authorList>
            <person name="Amselem J."/>
            <person name="Cuomo C.A."/>
            <person name="van Kan J.A.L."/>
            <person name="Viaud M."/>
            <person name="Benito E.P."/>
            <person name="Couloux A."/>
            <person name="Coutinho P.M."/>
            <person name="de Vries R.P."/>
            <person name="Dyer P.S."/>
            <person name="Fillinger S."/>
            <person name="Fournier E."/>
            <person name="Gout L."/>
            <person name="Hahn M."/>
            <person name="Kohn L."/>
            <person name="Lapalu N."/>
            <person name="Plummer K.M."/>
            <person name="Pradier J.-M."/>
            <person name="Quevillon E."/>
            <person name="Sharon A."/>
            <person name="Simon A."/>
            <person name="ten Have A."/>
            <person name="Tudzynski B."/>
            <person name="Tudzynski P."/>
            <person name="Wincker P."/>
            <person name="Andrew M."/>
            <person name="Anthouard V."/>
            <person name="Beever R.E."/>
            <person name="Beffa R."/>
            <person name="Benoit I."/>
            <person name="Bouzid O."/>
            <person name="Brault B."/>
            <person name="Chen Z."/>
            <person name="Choquer M."/>
            <person name="Collemare J."/>
            <person name="Cotton P."/>
            <person name="Danchin E.G."/>
            <person name="Da Silva C."/>
            <person name="Gautier A."/>
            <person name="Giraud C."/>
            <person name="Giraud T."/>
            <person name="Gonzalez C."/>
            <person name="Grossetete S."/>
            <person name="Gueldener U."/>
            <person name="Henrissat B."/>
            <person name="Howlett B.J."/>
            <person name="Kodira C."/>
            <person name="Kretschmer M."/>
            <person name="Lappartient A."/>
            <person name="Leroch M."/>
            <person name="Levis C."/>
            <person name="Mauceli E."/>
            <person name="Neuveglise C."/>
            <person name="Oeser B."/>
            <person name="Pearson M."/>
            <person name="Poulain J."/>
            <person name="Poussereau N."/>
            <person name="Quesneville H."/>
            <person name="Rascle C."/>
            <person name="Schumacher J."/>
            <person name="Segurens B."/>
            <person name="Sexton A."/>
            <person name="Silva E."/>
            <person name="Sirven C."/>
            <person name="Soanes D.M."/>
            <person name="Talbot N.J."/>
            <person name="Templeton M."/>
            <person name="Yandava C."/>
            <person name="Yarden O."/>
            <person name="Zeng Q."/>
            <person name="Rollins J.A."/>
            <person name="Lebrun M.-H."/>
            <person name="Dickman M."/>
        </authorList>
    </citation>
    <scope>NUCLEOTIDE SEQUENCE [LARGE SCALE GENOMIC DNA]</scope>
    <source>
        <strain>B05.10</strain>
    </source>
</reference>
<reference key="2">
    <citation type="journal article" date="2012" name="Eukaryot. Cell">
        <title>Genome update of Botrytis cinerea strains B05.10 and T4.</title>
        <authorList>
            <person name="Staats M."/>
            <person name="van Kan J.A.L."/>
        </authorList>
    </citation>
    <scope>NUCLEOTIDE SEQUENCE [LARGE SCALE GENOMIC DNA]</scope>
    <scope>GENOME REANNOTATION</scope>
    <source>
        <strain>B05.10</strain>
    </source>
</reference>
<reference key="3">
    <citation type="journal article" date="2017" name="Mol. Plant Pathol.">
        <title>A gapless genome sequence of the fungus Botrytis cinerea.</title>
        <authorList>
            <person name="van Kan J.A.L."/>
            <person name="Stassen J.H.M."/>
            <person name="Mosbach A."/>
            <person name="van der Lee T.A.J."/>
            <person name="Faino L."/>
            <person name="Farmer A.D."/>
            <person name="Papasotiriou D.G."/>
            <person name="Zhou S."/>
            <person name="Seidl M.F."/>
            <person name="Cottam E."/>
            <person name="Edel D."/>
            <person name="Hahn M."/>
            <person name="Schwartz D.C."/>
            <person name="Dietrich R.A."/>
            <person name="Widdison S."/>
            <person name="Scalliet G."/>
        </authorList>
    </citation>
    <scope>NUCLEOTIDE SEQUENCE [LARGE SCALE GENOMIC DNA]</scope>
    <scope>GENOME REANNOTATION</scope>
    <source>
        <strain>B05.10</strain>
    </source>
</reference>
<comment type="function">
    <text evidence="1">ATP-dependent RNA helicase associated with the nuclear pore complex and essential for mRNA export from the nucleus. May participate in a terminal step of mRNA export through the removal of proteins that accompany mRNA through the nucleopore complex. May also be involved in early transcription (By similarity).</text>
</comment>
<comment type="catalytic activity">
    <reaction>
        <text>ATP + H2O = ADP + phosphate + H(+)</text>
        <dbReference type="Rhea" id="RHEA:13065"/>
        <dbReference type="ChEBI" id="CHEBI:15377"/>
        <dbReference type="ChEBI" id="CHEBI:15378"/>
        <dbReference type="ChEBI" id="CHEBI:30616"/>
        <dbReference type="ChEBI" id="CHEBI:43474"/>
        <dbReference type="ChEBI" id="CHEBI:456216"/>
        <dbReference type="EC" id="3.6.4.13"/>
    </reaction>
</comment>
<comment type="subunit">
    <text evidence="1">Associates with the nuclear pore complex.</text>
</comment>
<comment type="subcellular location">
    <subcellularLocation>
        <location evidence="1">Cytoplasm</location>
    </subcellularLocation>
    <subcellularLocation>
        <location>Nucleus</location>
        <location>Nuclear pore complex</location>
    </subcellularLocation>
    <subcellularLocation>
        <location evidence="1">Nucleus membrane</location>
        <topology evidence="1">Peripheral membrane protein</topology>
        <orientation evidence="1">Cytoplasmic side</orientation>
    </subcellularLocation>
    <text evidence="1">Nuclear pore complex cytoplasmic fibrils.</text>
</comment>
<comment type="domain">
    <text>The Q motif is unique to and characteristic of the DEAD box family of RNA helicases and controls ATP binding and hydrolysis.</text>
</comment>
<comment type="similarity">
    <text evidence="5">Belongs to the DEAD box helicase family. DDX19/DBP5 subfamily.</text>
</comment>
<name>DBP5_BOTFB</name>
<evidence type="ECO:0000250" key="1"/>
<evidence type="ECO:0000255" key="2">
    <source>
        <dbReference type="PROSITE-ProRule" id="PRU00541"/>
    </source>
</evidence>
<evidence type="ECO:0000255" key="3">
    <source>
        <dbReference type="PROSITE-ProRule" id="PRU00542"/>
    </source>
</evidence>
<evidence type="ECO:0000256" key="4">
    <source>
        <dbReference type="SAM" id="MobiDB-lite"/>
    </source>
</evidence>
<evidence type="ECO:0000305" key="5"/>
<proteinExistence type="inferred from homology"/>
<organism>
    <name type="scientific">Botryotinia fuckeliana (strain B05.10)</name>
    <name type="common">Noble rot fungus</name>
    <name type="synonym">Botrytis cinerea</name>
    <dbReference type="NCBI Taxonomy" id="332648"/>
    <lineage>
        <taxon>Eukaryota</taxon>
        <taxon>Fungi</taxon>
        <taxon>Dikarya</taxon>
        <taxon>Ascomycota</taxon>
        <taxon>Pezizomycotina</taxon>
        <taxon>Leotiomycetes</taxon>
        <taxon>Helotiales</taxon>
        <taxon>Sclerotiniaceae</taxon>
        <taxon>Botrytis</taxon>
    </lineage>
</organism>
<keyword id="KW-0067">ATP-binding</keyword>
<keyword id="KW-0963">Cytoplasm</keyword>
<keyword id="KW-0347">Helicase</keyword>
<keyword id="KW-0378">Hydrolase</keyword>
<keyword id="KW-0472">Membrane</keyword>
<keyword id="KW-0509">mRNA transport</keyword>
<keyword id="KW-0906">Nuclear pore complex</keyword>
<keyword id="KW-0547">Nucleotide-binding</keyword>
<keyword id="KW-0539">Nucleus</keyword>
<keyword id="KW-0653">Protein transport</keyword>
<keyword id="KW-1185">Reference proteome</keyword>
<keyword id="KW-0694">RNA-binding</keyword>
<keyword id="KW-0811">Translocation</keyword>
<keyword id="KW-0813">Transport</keyword>
<dbReference type="EC" id="3.6.4.13"/>
<dbReference type="EMBL" id="CP009818">
    <property type="protein sequence ID" value="ATZ57140.1"/>
    <property type="molecule type" value="Genomic_DNA"/>
</dbReference>
<dbReference type="RefSeq" id="XP_001551325.1">
    <property type="nucleotide sequence ID" value="XM_001551275.1"/>
</dbReference>
<dbReference type="SMR" id="A6SBT4"/>
<dbReference type="EnsemblFungi" id="Bcin14g03100.1">
    <property type="protein sequence ID" value="Bcin14p03100.1"/>
    <property type="gene ID" value="Bcin14g03100"/>
</dbReference>
<dbReference type="GeneID" id="5431832"/>
<dbReference type="KEGG" id="bfu:BCIN_14g03100"/>
<dbReference type="VEuPathDB" id="FungiDB:Bcin14g03100"/>
<dbReference type="OrthoDB" id="10265785at2759"/>
<dbReference type="Proteomes" id="UP000001798">
    <property type="component" value="Chromosome bcin14"/>
</dbReference>
<dbReference type="GO" id="GO:0005934">
    <property type="term" value="C:cellular bud tip"/>
    <property type="evidence" value="ECO:0007669"/>
    <property type="project" value="EnsemblFungi"/>
</dbReference>
<dbReference type="GO" id="GO:0010494">
    <property type="term" value="C:cytoplasmic stress granule"/>
    <property type="evidence" value="ECO:0007669"/>
    <property type="project" value="EnsemblFungi"/>
</dbReference>
<dbReference type="GO" id="GO:0031965">
    <property type="term" value="C:nuclear membrane"/>
    <property type="evidence" value="ECO:0007669"/>
    <property type="project" value="UniProtKB-SubCell"/>
</dbReference>
<dbReference type="GO" id="GO:0044614">
    <property type="term" value="C:nuclear pore cytoplasmic filaments"/>
    <property type="evidence" value="ECO:0007669"/>
    <property type="project" value="EnsemblFungi"/>
</dbReference>
<dbReference type="GO" id="GO:0005524">
    <property type="term" value="F:ATP binding"/>
    <property type="evidence" value="ECO:0007669"/>
    <property type="project" value="UniProtKB-KW"/>
</dbReference>
<dbReference type="GO" id="GO:0016887">
    <property type="term" value="F:ATP hydrolysis activity"/>
    <property type="evidence" value="ECO:0007669"/>
    <property type="project" value="RHEA"/>
</dbReference>
<dbReference type="GO" id="GO:0000822">
    <property type="term" value="F:inositol hexakisphosphate binding"/>
    <property type="evidence" value="ECO:0007669"/>
    <property type="project" value="EnsemblFungi"/>
</dbReference>
<dbReference type="GO" id="GO:0003723">
    <property type="term" value="F:RNA binding"/>
    <property type="evidence" value="ECO:0007669"/>
    <property type="project" value="UniProtKB-KW"/>
</dbReference>
<dbReference type="GO" id="GO:0003724">
    <property type="term" value="F:RNA helicase activity"/>
    <property type="evidence" value="ECO:0007669"/>
    <property type="project" value="UniProtKB-EC"/>
</dbReference>
<dbReference type="GO" id="GO:0016973">
    <property type="term" value="P:poly(A)+ mRNA export from nucleus"/>
    <property type="evidence" value="ECO:0007669"/>
    <property type="project" value="EnsemblFungi"/>
</dbReference>
<dbReference type="GO" id="GO:0015031">
    <property type="term" value="P:protein transport"/>
    <property type="evidence" value="ECO:0007669"/>
    <property type="project" value="UniProtKB-KW"/>
</dbReference>
<dbReference type="GO" id="GO:0006415">
    <property type="term" value="P:translational termination"/>
    <property type="evidence" value="ECO:0007669"/>
    <property type="project" value="EnsemblFungi"/>
</dbReference>
<dbReference type="GO" id="GO:0006409">
    <property type="term" value="P:tRNA export from nucleus"/>
    <property type="evidence" value="ECO:0007669"/>
    <property type="project" value="EnsemblFungi"/>
</dbReference>
<dbReference type="CDD" id="cd17963">
    <property type="entry name" value="DEADc_DDX19_DDX25"/>
    <property type="match status" value="1"/>
</dbReference>
<dbReference type="CDD" id="cd18787">
    <property type="entry name" value="SF2_C_DEAD"/>
    <property type="match status" value="1"/>
</dbReference>
<dbReference type="FunFam" id="3.40.50.300:FF:000849">
    <property type="entry name" value="ATP-dependent RNA helicase DBP5"/>
    <property type="match status" value="1"/>
</dbReference>
<dbReference type="Gene3D" id="3.40.50.300">
    <property type="entry name" value="P-loop containing nucleotide triphosphate hydrolases"/>
    <property type="match status" value="2"/>
</dbReference>
<dbReference type="InterPro" id="IPR011545">
    <property type="entry name" value="DEAD/DEAH_box_helicase_dom"/>
</dbReference>
<dbReference type="InterPro" id="IPR014001">
    <property type="entry name" value="Helicase_ATP-bd"/>
</dbReference>
<dbReference type="InterPro" id="IPR001650">
    <property type="entry name" value="Helicase_C-like"/>
</dbReference>
<dbReference type="InterPro" id="IPR027417">
    <property type="entry name" value="P-loop_NTPase"/>
</dbReference>
<dbReference type="InterPro" id="IPR014014">
    <property type="entry name" value="RNA_helicase_DEAD_Q_motif"/>
</dbReference>
<dbReference type="PANTHER" id="PTHR47958">
    <property type="entry name" value="ATP-DEPENDENT RNA HELICASE DBP3"/>
    <property type="match status" value="1"/>
</dbReference>
<dbReference type="Pfam" id="PF00270">
    <property type="entry name" value="DEAD"/>
    <property type="match status" value="1"/>
</dbReference>
<dbReference type="Pfam" id="PF00271">
    <property type="entry name" value="Helicase_C"/>
    <property type="match status" value="1"/>
</dbReference>
<dbReference type="SMART" id="SM00487">
    <property type="entry name" value="DEXDc"/>
    <property type="match status" value="1"/>
</dbReference>
<dbReference type="SMART" id="SM00490">
    <property type="entry name" value="HELICc"/>
    <property type="match status" value="1"/>
</dbReference>
<dbReference type="SUPFAM" id="SSF52540">
    <property type="entry name" value="P-loop containing nucleoside triphosphate hydrolases"/>
    <property type="match status" value="1"/>
</dbReference>
<dbReference type="PROSITE" id="PS51192">
    <property type="entry name" value="HELICASE_ATP_BIND_1"/>
    <property type="match status" value="1"/>
</dbReference>
<dbReference type="PROSITE" id="PS51194">
    <property type="entry name" value="HELICASE_CTER"/>
    <property type="match status" value="1"/>
</dbReference>
<dbReference type="PROSITE" id="PS51195">
    <property type="entry name" value="Q_MOTIF"/>
    <property type="match status" value="1"/>
</dbReference>
<protein>
    <recommendedName>
        <fullName>ATP-dependent RNA helicase dbp5</fullName>
        <ecNumber>3.6.4.13</ecNumber>
    </recommendedName>
</protein>